<organism evidence="8">
    <name type="scientific">Arabidopsis thaliana</name>
    <name type="common">Mouse-ear cress</name>
    <dbReference type="NCBI Taxonomy" id="3702"/>
    <lineage>
        <taxon>Eukaryota</taxon>
        <taxon>Viridiplantae</taxon>
        <taxon>Streptophyta</taxon>
        <taxon>Embryophyta</taxon>
        <taxon>Tracheophyta</taxon>
        <taxon>Spermatophyta</taxon>
        <taxon>Magnoliopsida</taxon>
        <taxon>eudicotyledons</taxon>
        <taxon>Gunneridae</taxon>
        <taxon>Pentapetalae</taxon>
        <taxon>rosids</taxon>
        <taxon>malvids</taxon>
        <taxon>Brassicales</taxon>
        <taxon>Brassicaceae</taxon>
        <taxon>Camelineae</taxon>
        <taxon>Arabidopsis</taxon>
    </lineage>
</organism>
<keyword id="KW-0472">Membrane</keyword>
<keyword id="KW-1185">Reference proteome</keyword>
<keyword id="KW-0812">Transmembrane</keyword>
<keyword id="KW-1133">Transmembrane helix</keyword>
<dbReference type="EMBL" id="AC013483">
    <property type="protein sequence ID" value="AAF21205.1"/>
    <property type="status" value="ALT_SEQ"/>
    <property type="molecule type" value="Genomic_DNA"/>
</dbReference>
<dbReference type="EMBL" id="CP002686">
    <property type="protein sequence ID" value="AEE74624.1"/>
    <property type="molecule type" value="Genomic_DNA"/>
</dbReference>
<dbReference type="EMBL" id="BT002055">
    <property type="protein sequence ID" value="AAN72066.1"/>
    <property type="molecule type" value="mRNA"/>
</dbReference>
<dbReference type="EMBL" id="BT008814">
    <property type="protein sequence ID" value="AAP68253.1"/>
    <property type="molecule type" value="mRNA"/>
</dbReference>
<dbReference type="EMBL" id="AK221782">
    <property type="protein sequence ID" value="BAD93903.1"/>
    <property type="status" value="ALT_FRAME"/>
    <property type="molecule type" value="mRNA"/>
</dbReference>
<dbReference type="EMBL" id="AY085112">
    <property type="protein sequence ID" value="AAM61666.1"/>
    <property type="molecule type" value="mRNA"/>
</dbReference>
<dbReference type="RefSeq" id="NP_566326.1">
    <property type="nucleotide sequence ID" value="NM_111674.3"/>
</dbReference>
<dbReference type="FunCoup" id="Q8LF05">
    <property type="interactions" value="4549"/>
</dbReference>
<dbReference type="IntAct" id="Q8LF05">
    <property type="interactions" value="7"/>
</dbReference>
<dbReference type="STRING" id="3702.Q8LF05"/>
<dbReference type="iPTMnet" id="Q8LF05"/>
<dbReference type="PaxDb" id="3702-AT3G07950.1"/>
<dbReference type="ProteomicsDB" id="225912"/>
<dbReference type="EnsemblPlants" id="AT3G07950.1">
    <property type="protein sequence ID" value="AT3G07950.1"/>
    <property type="gene ID" value="AT3G07950"/>
</dbReference>
<dbReference type="GeneID" id="819986"/>
<dbReference type="Gramene" id="AT3G07950.1">
    <property type="protein sequence ID" value="AT3G07950.1"/>
    <property type="gene ID" value="AT3G07950"/>
</dbReference>
<dbReference type="KEGG" id="ath:AT3G07950"/>
<dbReference type="Araport" id="AT3G07950"/>
<dbReference type="TAIR" id="AT3G07950"/>
<dbReference type="eggNOG" id="KOG2890">
    <property type="taxonomic scope" value="Eukaryota"/>
</dbReference>
<dbReference type="HOGENOM" id="CLU_043563_0_0_1"/>
<dbReference type="InParanoid" id="Q8LF05"/>
<dbReference type="OMA" id="EIHFWEV"/>
<dbReference type="OrthoDB" id="73612at2759"/>
<dbReference type="PhylomeDB" id="Q8LF05"/>
<dbReference type="CD-CODE" id="4299E36E">
    <property type="entry name" value="Nucleolus"/>
</dbReference>
<dbReference type="PRO" id="PR:Q8LF05"/>
<dbReference type="Proteomes" id="UP000006548">
    <property type="component" value="Chromosome 3"/>
</dbReference>
<dbReference type="ExpressionAtlas" id="Q8LF05">
    <property type="expression patterns" value="baseline and differential"/>
</dbReference>
<dbReference type="GO" id="GO:0005794">
    <property type="term" value="C:Golgi apparatus"/>
    <property type="evidence" value="ECO:0007005"/>
    <property type="project" value="TAIR"/>
</dbReference>
<dbReference type="GO" id="GO:0000138">
    <property type="term" value="C:Golgi trans cisterna"/>
    <property type="evidence" value="ECO:0007005"/>
    <property type="project" value="TAIR"/>
</dbReference>
<dbReference type="GO" id="GO:0016020">
    <property type="term" value="C:membrane"/>
    <property type="evidence" value="ECO:0007669"/>
    <property type="project" value="UniProtKB-SubCell"/>
</dbReference>
<dbReference type="GO" id="GO:0006890">
    <property type="term" value="P:retrograde vesicle-mediated transport, Golgi to endoplasmic reticulum"/>
    <property type="evidence" value="ECO:0007669"/>
    <property type="project" value="InterPro"/>
</dbReference>
<dbReference type="FunFam" id="1.20.1540.10:FF:000004">
    <property type="entry name" value="Transmembrane protein 115"/>
    <property type="match status" value="1"/>
</dbReference>
<dbReference type="Gene3D" id="1.20.1540.10">
    <property type="entry name" value="Rhomboid-like"/>
    <property type="match status" value="1"/>
</dbReference>
<dbReference type="InterPro" id="IPR035952">
    <property type="entry name" value="Rhomboid-like_sf"/>
</dbReference>
<dbReference type="InterPro" id="IPR013861">
    <property type="entry name" value="TMEM115/Pdh1/Rbl19"/>
</dbReference>
<dbReference type="PANTHER" id="PTHR13377">
    <property type="entry name" value="PLACENTAL PROTEIN 6"/>
    <property type="match status" value="1"/>
</dbReference>
<dbReference type="PANTHER" id="PTHR13377:SF14">
    <property type="entry name" value="RHOMBOID-LIKE PROTEIN 19"/>
    <property type="match status" value="1"/>
</dbReference>
<dbReference type="Pfam" id="PF08551">
    <property type="entry name" value="DUF1751"/>
    <property type="match status" value="1"/>
</dbReference>
<dbReference type="SMART" id="SM01160">
    <property type="entry name" value="DUF1751"/>
    <property type="match status" value="1"/>
</dbReference>
<dbReference type="SUPFAM" id="SSF144091">
    <property type="entry name" value="Rhomboid-like"/>
    <property type="match status" value="1"/>
</dbReference>
<protein>
    <recommendedName>
        <fullName evidence="3">Rhomboid-like protein 19</fullName>
        <shortName evidence="3">AtRBL19</shortName>
    </recommendedName>
</protein>
<reference key="1">
    <citation type="journal article" date="2000" name="Nature">
        <title>Sequence and analysis of chromosome 3 of the plant Arabidopsis thaliana.</title>
        <authorList>
            <person name="Salanoubat M."/>
            <person name="Lemcke K."/>
            <person name="Rieger M."/>
            <person name="Ansorge W."/>
            <person name="Unseld M."/>
            <person name="Fartmann B."/>
            <person name="Valle G."/>
            <person name="Bloecker H."/>
            <person name="Perez-Alonso M."/>
            <person name="Obermaier B."/>
            <person name="Delseny M."/>
            <person name="Boutry M."/>
            <person name="Grivell L.A."/>
            <person name="Mache R."/>
            <person name="Puigdomenech P."/>
            <person name="De Simone V."/>
            <person name="Choisne N."/>
            <person name="Artiguenave F."/>
            <person name="Robert C."/>
            <person name="Brottier P."/>
            <person name="Wincker P."/>
            <person name="Cattolico L."/>
            <person name="Weissenbach J."/>
            <person name="Saurin W."/>
            <person name="Quetier F."/>
            <person name="Schaefer M."/>
            <person name="Mueller-Auer S."/>
            <person name="Gabel C."/>
            <person name="Fuchs M."/>
            <person name="Benes V."/>
            <person name="Wurmbach E."/>
            <person name="Drzonek H."/>
            <person name="Erfle H."/>
            <person name="Jordan N."/>
            <person name="Bangert S."/>
            <person name="Wiedelmann R."/>
            <person name="Kranz H."/>
            <person name="Voss H."/>
            <person name="Holland R."/>
            <person name="Brandt P."/>
            <person name="Nyakatura G."/>
            <person name="Vezzi A."/>
            <person name="D'Angelo M."/>
            <person name="Pallavicini A."/>
            <person name="Toppo S."/>
            <person name="Simionati B."/>
            <person name="Conrad A."/>
            <person name="Hornischer K."/>
            <person name="Kauer G."/>
            <person name="Loehnert T.-H."/>
            <person name="Nordsiek G."/>
            <person name="Reichelt J."/>
            <person name="Scharfe M."/>
            <person name="Schoen O."/>
            <person name="Bargues M."/>
            <person name="Terol J."/>
            <person name="Climent J."/>
            <person name="Navarro P."/>
            <person name="Collado C."/>
            <person name="Perez-Perez A."/>
            <person name="Ottenwaelder B."/>
            <person name="Duchemin D."/>
            <person name="Cooke R."/>
            <person name="Laudie M."/>
            <person name="Berger-Llauro C."/>
            <person name="Purnelle B."/>
            <person name="Masuy D."/>
            <person name="de Haan M."/>
            <person name="Maarse A.C."/>
            <person name="Alcaraz J.-P."/>
            <person name="Cottet A."/>
            <person name="Casacuberta E."/>
            <person name="Monfort A."/>
            <person name="Argiriou A."/>
            <person name="Flores M."/>
            <person name="Liguori R."/>
            <person name="Vitale D."/>
            <person name="Mannhaupt G."/>
            <person name="Haase D."/>
            <person name="Schoof H."/>
            <person name="Rudd S."/>
            <person name="Zaccaria P."/>
            <person name="Mewes H.-W."/>
            <person name="Mayer K.F.X."/>
            <person name="Kaul S."/>
            <person name="Town C.D."/>
            <person name="Koo H.L."/>
            <person name="Tallon L.J."/>
            <person name="Jenkins J."/>
            <person name="Rooney T."/>
            <person name="Rizzo M."/>
            <person name="Walts A."/>
            <person name="Utterback T."/>
            <person name="Fujii C.Y."/>
            <person name="Shea T.P."/>
            <person name="Creasy T.H."/>
            <person name="Haas B."/>
            <person name="Maiti R."/>
            <person name="Wu D."/>
            <person name="Peterson J."/>
            <person name="Van Aken S."/>
            <person name="Pai G."/>
            <person name="Militscher J."/>
            <person name="Sellers P."/>
            <person name="Gill J.E."/>
            <person name="Feldblyum T.V."/>
            <person name="Preuss D."/>
            <person name="Lin X."/>
            <person name="Nierman W.C."/>
            <person name="Salzberg S.L."/>
            <person name="White O."/>
            <person name="Venter J.C."/>
            <person name="Fraser C.M."/>
            <person name="Kaneko T."/>
            <person name="Nakamura Y."/>
            <person name="Sato S."/>
            <person name="Kato T."/>
            <person name="Asamizu E."/>
            <person name="Sasamoto S."/>
            <person name="Kimura T."/>
            <person name="Idesawa K."/>
            <person name="Kawashima K."/>
            <person name="Kishida Y."/>
            <person name="Kiyokawa C."/>
            <person name="Kohara M."/>
            <person name="Matsumoto M."/>
            <person name="Matsuno A."/>
            <person name="Muraki A."/>
            <person name="Nakayama S."/>
            <person name="Nakazaki N."/>
            <person name="Shinpo S."/>
            <person name="Takeuchi C."/>
            <person name="Wada T."/>
            <person name="Watanabe A."/>
            <person name="Yamada M."/>
            <person name="Yasuda M."/>
            <person name="Tabata S."/>
        </authorList>
    </citation>
    <scope>NUCLEOTIDE SEQUENCE [LARGE SCALE GENOMIC DNA]</scope>
    <source>
        <strain>cv. Columbia</strain>
    </source>
</reference>
<reference key="2">
    <citation type="journal article" date="2017" name="Plant J.">
        <title>Araport11: a complete reannotation of the Arabidopsis thaliana reference genome.</title>
        <authorList>
            <person name="Cheng C.Y."/>
            <person name="Krishnakumar V."/>
            <person name="Chan A.P."/>
            <person name="Thibaud-Nissen F."/>
            <person name="Schobel S."/>
            <person name="Town C.D."/>
        </authorList>
    </citation>
    <scope>GENOME REANNOTATION</scope>
    <source>
        <strain>cv. Columbia</strain>
    </source>
</reference>
<reference key="3">
    <citation type="journal article" date="2003" name="Science">
        <title>Empirical analysis of transcriptional activity in the Arabidopsis genome.</title>
        <authorList>
            <person name="Yamada K."/>
            <person name="Lim J."/>
            <person name="Dale J.M."/>
            <person name="Chen H."/>
            <person name="Shinn P."/>
            <person name="Palm C.J."/>
            <person name="Southwick A.M."/>
            <person name="Wu H.C."/>
            <person name="Kim C.J."/>
            <person name="Nguyen M."/>
            <person name="Pham P.K."/>
            <person name="Cheuk R.F."/>
            <person name="Karlin-Newmann G."/>
            <person name="Liu S.X."/>
            <person name="Lam B."/>
            <person name="Sakano H."/>
            <person name="Wu T."/>
            <person name="Yu G."/>
            <person name="Miranda M."/>
            <person name="Quach H.L."/>
            <person name="Tripp M."/>
            <person name="Chang C.H."/>
            <person name="Lee J.M."/>
            <person name="Toriumi M.J."/>
            <person name="Chan M.M."/>
            <person name="Tang C.C."/>
            <person name="Onodera C.S."/>
            <person name="Deng J.M."/>
            <person name="Akiyama K."/>
            <person name="Ansari Y."/>
            <person name="Arakawa T."/>
            <person name="Banh J."/>
            <person name="Banno F."/>
            <person name="Bowser L."/>
            <person name="Brooks S.Y."/>
            <person name="Carninci P."/>
            <person name="Chao Q."/>
            <person name="Choy N."/>
            <person name="Enju A."/>
            <person name="Goldsmith A.D."/>
            <person name="Gurjal M."/>
            <person name="Hansen N.F."/>
            <person name="Hayashizaki Y."/>
            <person name="Johnson-Hopson C."/>
            <person name="Hsuan V.W."/>
            <person name="Iida K."/>
            <person name="Karnes M."/>
            <person name="Khan S."/>
            <person name="Koesema E."/>
            <person name="Ishida J."/>
            <person name="Jiang P.X."/>
            <person name="Jones T."/>
            <person name="Kawai J."/>
            <person name="Kamiya A."/>
            <person name="Meyers C."/>
            <person name="Nakajima M."/>
            <person name="Narusaka M."/>
            <person name="Seki M."/>
            <person name="Sakurai T."/>
            <person name="Satou M."/>
            <person name="Tamse R."/>
            <person name="Vaysberg M."/>
            <person name="Wallender E.K."/>
            <person name="Wong C."/>
            <person name="Yamamura Y."/>
            <person name="Yuan S."/>
            <person name="Shinozaki K."/>
            <person name="Davis R.W."/>
            <person name="Theologis A."/>
            <person name="Ecker J.R."/>
        </authorList>
    </citation>
    <scope>NUCLEOTIDE SEQUENCE [LARGE SCALE MRNA]</scope>
    <source>
        <strain>cv. Columbia</strain>
    </source>
</reference>
<reference key="4">
    <citation type="submission" date="2005-03" db="EMBL/GenBank/DDBJ databases">
        <title>Large-scale analysis of RIKEN Arabidopsis full-length (RAFL) cDNAs.</title>
        <authorList>
            <person name="Totoki Y."/>
            <person name="Seki M."/>
            <person name="Ishida J."/>
            <person name="Nakajima M."/>
            <person name="Enju A."/>
            <person name="Kamiya A."/>
            <person name="Narusaka M."/>
            <person name="Shin-i T."/>
            <person name="Nakagawa M."/>
            <person name="Sakamoto N."/>
            <person name="Oishi K."/>
            <person name="Kohara Y."/>
            <person name="Kobayashi M."/>
            <person name="Toyoda A."/>
            <person name="Sakaki Y."/>
            <person name="Sakurai T."/>
            <person name="Iida K."/>
            <person name="Akiyama K."/>
            <person name="Satou M."/>
            <person name="Toyoda T."/>
            <person name="Konagaya A."/>
            <person name="Carninci P."/>
            <person name="Kawai J."/>
            <person name="Hayashizaki Y."/>
            <person name="Shinozaki K."/>
        </authorList>
    </citation>
    <scope>NUCLEOTIDE SEQUENCE [LARGE SCALE MRNA]</scope>
    <source>
        <strain>cv. Columbia</strain>
    </source>
</reference>
<reference key="5">
    <citation type="submission" date="2002-03" db="EMBL/GenBank/DDBJ databases">
        <title>Full-length cDNA from Arabidopsis thaliana.</title>
        <authorList>
            <person name="Brover V.V."/>
            <person name="Troukhan M.E."/>
            <person name="Alexandrov N.A."/>
            <person name="Lu Y.-P."/>
            <person name="Flavell R.B."/>
            <person name="Feldmann K.A."/>
        </authorList>
    </citation>
    <scope>NUCLEOTIDE SEQUENCE [LARGE SCALE MRNA]</scope>
</reference>
<reference key="6">
    <citation type="journal article" date="2006" name="BMC Genomics">
        <title>Cross genome comparisons of serine proteases in Arabidopsis and rice.</title>
        <authorList>
            <person name="Tripathi L.P."/>
            <person name="Sowdhamini R."/>
        </authorList>
    </citation>
    <scope>GENE FAMILY</scope>
    <scope>NOMENCLATURE</scope>
</reference>
<reference key="7">
    <citation type="journal article" date="2007" name="Genome Res.">
        <title>Functional and evolutionary implications of enhanced genomic analysis of rhomboid intramembrane proteases.</title>
        <authorList>
            <person name="Lemberg M.K."/>
            <person name="Freeman M."/>
        </authorList>
    </citation>
    <scope>GENE FAMILY</scope>
</reference>
<sequence>MSSPGTSMFTNFTKLCKGLALVLVVGHLVVQFIPATVPYLALIPARTIPFAWNLITSGYFELSVYGVVFSTVSLLFMGKFLEPVWGSTEFLKFIFVVNFLTYLCVFVTAIALYYITRLEVYLYMPFAGFHGVLAGLLVGIKQIIPDQEILLLKIKAKWLPSIMLILSIASSFFTLDSAAYLPTLIFGTYMGWLYLRYLQRRPETKLRGDPSDDFAFSTFFPELLRPVIDPIALIFHRMLCGRSNATSEDHDYSTSGAPLPGSDSAEASRRRERGARALEERLGTERLVPARNKDELQSDGLDNV</sequence>
<proteinExistence type="evidence at transcript level"/>
<name>RBL19_ARATH</name>
<accession>Q8LF05</accession>
<accession>Q56X94</accession>
<accession>Q9SFB9</accession>
<evidence type="ECO:0000255" key="1"/>
<evidence type="ECO:0000256" key="2">
    <source>
        <dbReference type="SAM" id="MobiDB-lite"/>
    </source>
</evidence>
<evidence type="ECO:0000303" key="3">
    <source>
    </source>
</evidence>
<evidence type="ECO:0000303" key="4">
    <source>
    </source>
</evidence>
<evidence type="ECO:0000305" key="5"/>
<evidence type="ECO:0000312" key="6">
    <source>
        <dbReference type="Araport" id="AT3G07950"/>
    </source>
</evidence>
<evidence type="ECO:0000312" key="7">
    <source>
        <dbReference type="EMBL" id="AAF21205.1"/>
    </source>
</evidence>
<evidence type="ECO:0000312" key="8">
    <source>
        <dbReference type="EMBL" id="AAM61666.1"/>
    </source>
</evidence>
<gene>
    <name evidence="3" type="primary">RBL19</name>
    <name evidence="6" type="ordered locus">At3g07950</name>
    <name evidence="7" type="ORF">F17A17.29</name>
</gene>
<feature type="chain" id="PRO_0000433338" description="Rhomboid-like protein 19">
    <location>
        <begin position="1"/>
        <end position="304"/>
    </location>
</feature>
<feature type="transmembrane region" description="Helical" evidence="1">
    <location>
        <begin position="23"/>
        <end position="43"/>
    </location>
</feature>
<feature type="transmembrane region" description="Helical" evidence="1">
    <location>
        <begin position="58"/>
        <end position="78"/>
    </location>
</feature>
<feature type="transmembrane region" description="Helical" evidence="1">
    <location>
        <begin position="93"/>
        <end position="113"/>
    </location>
</feature>
<feature type="transmembrane region" description="Helical" evidence="1">
    <location>
        <begin position="120"/>
        <end position="140"/>
    </location>
</feature>
<feature type="transmembrane region" description="Helical" evidence="1">
    <location>
        <begin position="158"/>
        <end position="175"/>
    </location>
</feature>
<feature type="transmembrane region" description="Helical" evidence="1">
    <location>
        <begin position="179"/>
        <end position="198"/>
    </location>
</feature>
<feature type="region of interest" description="Disordered" evidence="2">
    <location>
        <begin position="247"/>
        <end position="304"/>
    </location>
</feature>
<feature type="compositionally biased region" description="Basic and acidic residues" evidence="2">
    <location>
        <begin position="266"/>
        <end position="284"/>
    </location>
</feature>
<feature type="sequence conflict" description="In Ref. 4; BAD93903." evidence="5" ref="4">
    <original>A</original>
    <variation>V</variation>
    <location>
        <position position="178"/>
    </location>
</feature>
<comment type="function">
    <text evidence="3">Probable rhomboid-type serine protease that catalyzes intramembrane proteolysis.</text>
</comment>
<comment type="subcellular location">
    <subcellularLocation>
        <location evidence="1">Membrane</location>
        <topology evidence="1">Multi-pass membrane protein</topology>
    </subcellularLocation>
</comment>
<comment type="similarity">
    <text evidence="5">Belongs to the peptidase S54 family.</text>
</comment>
<comment type="caution">
    <text evidence="4">Might be an inactive rhomboid-type serine protease due to mismatches with the consensus active sites.</text>
</comment>
<comment type="sequence caution" evidence="5">
    <conflict type="erroneous gene model prediction">
        <sequence resource="EMBL-CDS" id="AAF21205"/>
    </conflict>
</comment>
<comment type="sequence caution" evidence="5">
    <conflict type="frameshift">
        <sequence resource="EMBL-CDS" id="BAD93903"/>
    </conflict>
</comment>